<keyword id="KW-0002">3D-structure</keyword>
<keyword id="KW-0007">Acetylation</keyword>
<keyword id="KW-0025">Alternative splicing</keyword>
<keyword id="KW-0036">Amyotrophic lateral sclerosis</keyword>
<keyword id="KW-0175">Coiled coil</keyword>
<keyword id="KW-0963">Cytoplasm</keyword>
<keyword id="KW-0225">Disease variant</keyword>
<keyword id="KW-0967">Endosome</keyword>
<keyword id="KW-0472">Membrane</keyword>
<keyword id="KW-0523">Neurodegeneration</keyword>
<keyword id="KW-0597">Phosphoprotein</keyword>
<keyword id="KW-0653">Protein transport</keyword>
<keyword id="KW-1267">Proteomics identification</keyword>
<keyword id="KW-1185">Reference proteome</keyword>
<keyword id="KW-0813">Transport</keyword>
<evidence type="ECO:0000250" key="1"/>
<evidence type="ECO:0000255" key="2"/>
<evidence type="ECO:0000256" key="3">
    <source>
        <dbReference type="SAM" id="MobiDB-lite"/>
    </source>
</evidence>
<evidence type="ECO:0000269" key="4">
    <source>
    </source>
</evidence>
<evidence type="ECO:0000269" key="5">
    <source>
    </source>
</evidence>
<evidence type="ECO:0000269" key="6">
    <source>
    </source>
</evidence>
<evidence type="ECO:0000269" key="7">
    <source>
    </source>
</evidence>
<evidence type="ECO:0000269" key="8">
    <source>
    </source>
</evidence>
<evidence type="ECO:0000305" key="9"/>
<evidence type="ECO:0000305" key="10">
    <source>
    </source>
</evidence>
<evidence type="ECO:0007744" key="11">
    <source>
    </source>
</evidence>
<evidence type="ECO:0007744" key="12">
    <source>
    </source>
</evidence>
<evidence type="ECO:0007744" key="13">
    <source>
    </source>
</evidence>
<evidence type="ECO:0007744" key="14">
    <source>
    </source>
</evidence>
<evidence type="ECO:0007744" key="15">
    <source>
    </source>
</evidence>
<evidence type="ECO:0007744" key="16">
    <source>
    </source>
</evidence>
<evidence type="ECO:0007829" key="17">
    <source>
        <dbReference type="PDB" id="2JQK"/>
    </source>
</evidence>
<sequence>MASLFKKKTVDDVIKEQNRELRGTQRAIIRDRAALEKQEKQLELEIKKMAKIGNKEACKVLAKQLVHLRKQKTRTFAVSSKVTSMSTQTKVMNSQMKMAGAMSTTAKTMQAVNKKMDPQKTLQTMQNFQKENMKMEMTEEMINDTLDDIFDGSDDEEESQDIVNQVLDEIGIEISGKMAKAPSAARSLPSASTSKATISDEEIERQLKALGVD</sequence>
<gene>
    <name type="primary">CHMP2B</name>
    <name type="ORF">CGI-84</name>
</gene>
<proteinExistence type="evidence at protein level"/>
<protein>
    <recommendedName>
        <fullName>Charged multivesicular body protein 2b</fullName>
    </recommendedName>
    <alternativeName>
        <fullName>CHMP2.5</fullName>
    </alternativeName>
    <alternativeName>
        <fullName>Chromatin-modifying protein 2b</fullName>
        <shortName>CHMP2b</shortName>
    </alternativeName>
    <alternativeName>
        <fullName>Vacuolar protein sorting-associated protein 2-2</fullName>
        <shortName>Vps2-2</shortName>
        <shortName>hVps2-2</shortName>
    </alternativeName>
</protein>
<name>CHM2B_HUMAN</name>
<accession>Q9UQN3</accession>
<accession>B4DJG8</accession>
<accession>Q53HC7</accession>
<accession>Q9Y4U6</accession>
<comment type="function">
    <text>Probable core component of the endosomal sorting required for transport complex III (ESCRT-III) which is involved in multivesicular bodies (MVBs) formation and sorting of endosomal cargo proteins into MVBs. MVBs contain intraluminal vesicles (ILVs) that are generated by invagination and scission from the limiting membrane of the endosome and mostly are delivered to lysosomes enabling degradation of membrane proteins, such as stimulated growth factor receptors, lysosomal enzymes and lipids. The MVB pathway appears to require the sequential function of ESCRT-O, -I,-II and -III complexes. ESCRT-III proteins mostly dissociate from the invaginating membrane before the ILV is released. The ESCRT machinery also functions in topologically equivalent membrane fission events, such as the terminal stages of cytokinesis and the budding of enveloped viruses (HIV-1 and other lentiviruses). ESCRT-III proteins are believed to mediate the necessary vesicle extrusion and/or membrane fission activities, possibly in conjunction with the AAA ATPase VPS4.</text>
</comment>
<comment type="subunit">
    <text evidence="4 7">Probable core component of the endosomal sorting required for transport complex III (ESCRT-III). ESCRT-III components are thought to multimerize to form a flat lattice on the perimeter membrane of the endosome. Several assembly forms of ESCRT-III may exist that interact and act sequentially. Interacts with CHMP2A. Interacts with VPS4A. Interacts with VPS4B; the interaction is direct.</text>
</comment>
<comment type="interaction">
    <interactant intactId="EBI-718324">
        <id>Q9UQN3</id>
    </interactant>
    <interactant intactId="EBI-2118119">
        <id>Q9Y3E7</id>
        <label>CHMP3</label>
    </interactant>
    <organismsDiffer>false</organismsDiffer>
    <experiments>2</experiments>
</comment>
<comment type="interaction">
    <interactant intactId="EBI-718324">
        <id>Q9UQN3</id>
    </interactant>
    <interactant intactId="EBI-749627">
        <id>Q9H444</id>
        <label>CHMP4B</label>
    </interactant>
    <organismsDiffer>false</organismsDiffer>
    <experiments>2</experiments>
</comment>
<comment type="interaction">
    <interactant intactId="EBI-718324">
        <id>Q9UQN3</id>
    </interactant>
    <interactant intactId="EBI-750109">
        <id>Q9NYB0</id>
        <label>TERF2IP</label>
    </interactant>
    <organismsDiffer>false</organismsDiffer>
    <experiments>2</experiments>
</comment>
<comment type="interaction">
    <interactant intactId="EBI-718324">
        <id>Q9UQN3</id>
    </interactant>
    <interactant intactId="EBI-25475797">
        <id>PRO_0000037309</id>
        <label>rep</label>
        <dbReference type="UniProtKB" id="P0C6X7"/>
    </interactant>
    <organismsDiffer>true</organismsDiffer>
    <experiments>2</experiments>
</comment>
<comment type="interaction">
    <interactant intactId="EBI-718324">
        <id>Q9UQN3</id>
    </interactant>
    <interactant intactId="EBI-25475825">
        <id>PRO_0000037316</id>
        <label>rep</label>
        <dbReference type="UniProtKB" id="P0C6X7"/>
    </interactant>
    <organismsDiffer>true</organismsDiffer>
    <experiments>2</experiments>
</comment>
<comment type="interaction">
    <interactant intactId="EBI-15663586">
        <id>Q9UQN3-1</id>
    </interactant>
    <interactant intactId="EBI-2514459">
        <id>O75351</id>
        <label>VPS4B</label>
    </interactant>
    <organismsDiffer>false</organismsDiffer>
    <experiments>2</experiments>
</comment>
<comment type="subcellular location">
    <subcellularLocation>
        <location evidence="5">Cytoplasm</location>
        <location evidence="5">Cytosol</location>
    </subcellularLocation>
    <subcellularLocation>
        <location evidence="10">Late endosome membrane</location>
        <topology evidence="10">Peripheral membrane protein</topology>
    </subcellularLocation>
</comment>
<comment type="alternative products">
    <event type="alternative splicing"/>
    <isoform>
        <id>Q9UQN3-1</id>
        <name>1</name>
        <sequence type="displayed"/>
    </isoform>
    <isoform>
        <id>Q9UQN3-2</id>
        <name>2</name>
        <sequence type="described" ref="VSP_045142"/>
    </isoform>
</comment>
<comment type="tissue specificity">
    <text evidence="5">Widely expressed. Expressed in brain, heart, skeletal muscle, spleen, kidney, liver, small intestine, pancreas, lung, placenta and leukocytes. In brain, it is expressed in cerebellum, cerebral cortex, medulla, spinal cord, occipital lobe, frontal lobe, temporal lobe and putamen.</text>
</comment>
<comment type="domain">
    <text evidence="1">The acidic C-terminus and the basic N-termminus are thought to render the protein in a closed, soluble and inactive conformation through an autoinhibitory intramolecular interaction. The open and active conformation, which enables membrane binding and oligomerization, is achieved by interaction with other cellular binding partners, probably including other ESCRT components (By similarity).</text>
</comment>
<comment type="disease" evidence="5 6 8">
    <disease id="DI-01633">
        <name>Frontotemporal dementia and/or amyotrophic lateral sclerosis 7</name>
        <acronym>FTDALS7</acronym>
        <description>A neurodegenerative disorder characterized by frontotemporal dementia and/or amyotrophic lateral sclerosis in affected individuals. There is high intrafamilial variation. Frontotemporal dementia (FTD) is characterized by frontal and temporal lobe atrophy associated with neuronal loss, gliosis, and dementia. Patients exhibit progressive changes in social, behavioral, and/or language function. Amyotrophic lateral sclerosis (ALS) is characterized by the death of motor neurons in the brain, brainstem, and spinal cord, resulting in fatal paralysis. FTDALS7 is an autosomal dominant form characterized by onset of ALS or FTD in adulthood. A few patients may have both phenotypes.</description>
        <dbReference type="MIM" id="600795"/>
    </disease>
    <text>The disease is caused by variants affecting the gene represented in this entry.</text>
</comment>
<comment type="similarity">
    <text evidence="9">Belongs to the SNF7 family.</text>
</comment>
<organism>
    <name type="scientific">Homo sapiens</name>
    <name type="common">Human</name>
    <dbReference type="NCBI Taxonomy" id="9606"/>
    <lineage>
        <taxon>Eukaryota</taxon>
        <taxon>Metazoa</taxon>
        <taxon>Chordata</taxon>
        <taxon>Craniata</taxon>
        <taxon>Vertebrata</taxon>
        <taxon>Euteleostomi</taxon>
        <taxon>Mammalia</taxon>
        <taxon>Eutheria</taxon>
        <taxon>Euarchontoglires</taxon>
        <taxon>Primates</taxon>
        <taxon>Haplorrhini</taxon>
        <taxon>Catarrhini</taxon>
        <taxon>Hominidae</taxon>
        <taxon>Homo</taxon>
    </lineage>
</organism>
<reference key="1">
    <citation type="journal article" date="2000" name="Genome Res.">
        <title>Identification of novel human genes evolutionarily conserved in Caenorhabditis elegans by comparative proteomics.</title>
        <authorList>
            <person name="Lai C.-H."/>
            <person name="Chou C.-Y."/>
            <person name="Ch'ang L.-Y."/>
            <person name="Liu C.-S."/>
            <person name="Lin W.-C."/>
        </authorList>
    </citation>
    <scope>NUCLEOTIDE SEQUENCE [LARGE SCALE MRNA] (ISOFORM 1)</scope>
</reference>
<reference key="2">
    <citation type="journal article" date="2001" name="Genome Res.">
        <title>Towards a catalog of human genes and proteins: sequencing and analysis of 500 novel complete protein coding human cDNAs.</title>
        <authorList>
            <person name="Wiemann S."/>
            <person name="Weil B."/>
            <person name="Wellenreuther R."/>
            <person name="Gassenhuber J."/>
            <person name="Glassl S."/>
            <person name="Ansorge W."/>
            <person name="Boecher M."/>
            <person name="Bloecker H."/>
            <person name="Bauersachs S."/>
            <person name="Blum H."/>
            <person name="Lauber J."/>
            <person name="Duesterhoeft A."/>
            <person name="Beyer A."/>
            <person name="Koehrer K."/>
            <person name="Strack N."/>
            <person name="Mewes H.-W."/>
            <person name="Ottenwaelder B."/>
            <person name="Obermaier B."/>
            <person name="Tampe J."/>
            <person name="Heubner D."/>
            <person name="Wambutt R."/>
            <person name="Korn B."/>
            <person name="Klein M."/>
            <person name="Poustka A."/>
        </authorList>
    </citation>
    <scope>NUCLEOTIDE SEQUENCE [LARGE SCALE MRNA] (ISOFORM 1)</scope>
    <source>
        <tissue>Brain</tissue>
    </source>
</reference>
<reference key="3">
    <citation type="journal article" date="2004" name="Nat. Genet.">
        <title>Complete sequencing and characterization of 21,243 full-length human cDNAs.</title>
        <authorList>
            <person name="Ota T."/>
            <person name="Suzuki Y."/>
            <person name="Nishikawa T."/>
            <person name="Otsuki T."/>
            <person name="Sugiyama T."/>
            <person name="Irie R."/>
            <person name="Wakamatsu A."/>
            <person name="Hayashi K."/>
            <person name="Sato H."/>
            <person name="Nagai K."/>
            <person name="Kimura K."/>
            <person name="Makita H."/>
            <person name="Sekine M."/>
            <person name="Obayashi M."/>
            <person name="Nishi T."/>
            <person name="Shibahara T."/>
            <person name="Tanaka T."/>
            <person name="Ishii S."/>
            <person name="Yamamoto J."/>
            <person name="Saito K."/>
            <person name="Kawai Y."/>
            <person name="Isono Y."/>
            <person name="Nakamura Y."/>
            <person name="Nagahari K."/>
            <person name="Murakami K."/>
            <person name="Yasuda T."/>
            <person name="Iwayanagi T."/>
            <person name="Wagatsuma M."/>
            <person name="Shiratori A."/>
            <person name="Sudo H."/>
            <person name="Hosoiri T."/>
            <person name="Kaku Y."/>
            <person name="Kodaira H."/>
            <person name="Kondo H."/>
            <person name="Sugawara M."/>
            <person name="Takahashi M."/>
            <person name="Kanda K."/>
            <person name="Yokoi T."/>
            <person name="Furuya T."/>
            <person name="Kikkawa E."/>
            <person name="Omura Y."/>
            <person name="Abe K."/>
            <person name="Kamihara K."/>
            <person name="Katsuta N."/>
            <person name="Sato K."/>
            <person name="Tanikawa M."/>
            <person name="Yamazaki M."/>
            <person name="Ninomiya K."/>
            <person name="Ishibashi T."/>
            <person name="Yamashita H."/>
            <person name="Murakawa K."/>
            <person name="Fujimori K."/>
            <person name="Tanai H."/>
            <person name="Kimata M."/>
            <person name="Watanabe M."/>
            <person name="Hiraoka S."/>
            <person name="Chiba Y."/>
            <person name="Ishida S."/>
            <person name="Ono Y."/>
            <person name="Takiguchi S."/>
            <person name="Watanabe S."/>
            <person name="Yosida M."/>
            <person name="Hotuta T."/>
            <person name="Kusano J."/>
            <person name="Kanehori K."/>
            <person name="Takahashi-Fujii A."/>
            <person name="Hara H."/>
            <person name="Tanase T.-O."/>
            <person name="Nomura Y."/>
            <person name="Togiya S."/>
            <person name="Komai F."/>
            <person name="Hara R."/>
            <person name="Takeuchi K."/>
            <person name="Arita M."/>
            <person name="Imose N."/>
            <person name="Musashino K."/>
            <person name="Yuuki H."/>
            <person name="Oshima A."/>
            <person name="Sasaki N."/>
            <person name="Aotsuka S."/>
            <person name="Yoshikawa Y."/>
            <person name="Matsunawa H."/>
            <person name="Ichihara T."/>
            <person name="Shiohata N."/>
            <person name="Sano S."/>
            <person name="Moriya S."/>
            <person name="Momiyama H."/>
            <person name="Satoh N."/>
            <person name="Takami S."/>
            <person name="Terashima Y."/>
            <person name="Suzuki O."/>
            <person name="Nakagawa S."/>
            <person name="Senoh A."/>
            <person name="Mizoguchi H."/>
            <person name="Goto Y."/>
            <person name="Shimizu F."/>
            <person name="Wakebe H."/>
            <person name="Hishigaki H."/>
            <person name="Watanabe T."/>
            <person name="Sugiyama A."/>
            <person name="Takemoto M."/>
            <person name="Kawakami B."/>
            <person name="Yamazaki M."/>
            <person name="Watanabe K."/>
            <person name="Kumagai A."/>
            <person name="Itakura S."/>
            <person name="Fukuzumi Y."/>
            <person name="Fujimori Y."/>
            <person name="Komiyama M."/>
            <person name="Tashiro H."/>
            <person name="Tanigami A."/>
            <person name="Fujiwara T."/>
            <person name="Ono T."/>
            <person name="Yamada K."/>
            <person name="Fujii Y."/>
            <person name="Ozaki K."/>
            <person name="Hirao M."/>
            <person name="Ohmori Y."/>
            <person name="Kawabata A."/>
            <person name="Hikiji T."/>
            <person name="Kobatake N."/>
            <person name="Inagaki H."/>
            <person name="Ikema Y."/>
            <person name="Okamoto S."/>
            <person name="Okitani R."/>
            <person name="Kawakami T."/>
            <person name="Noguchi S."/>
            <person name="Itoh T."/>
            <person name="Shigeta K."/>
            <person name="Senba T."/>
            <person name="Matsumura K."/>
            <person name="Nakajima Y."/>
            <person name="Mizuno T."/>
            <person name="Morinaga M."/>
            <person name="Sasaki M."/>
            <person name="Togashi T."/>
            <person name="Oyama M."/>
            <person name="Hata H."/>
            <person name="Watanabe M."/>
            <person name="Komatsu T."/>
            <person name="Mizushima-Sugano J."/>
            <person name="Satoh T."/>
            <person name="Shirai Y."/>
            <person name="Takahashi Y."/>
            <person name="Nakagawa K."/>
            <person name="Okumura K."/>
            <person name="Nagase T."/>
            <person name="Nomura N."/>
            <person name="Kikuchi H."/>
            <person name="Masuho Y."/>
            <person name="Yamashita R."/>
            <person name="Nakai K."/>
            <person name="Yada T."/>
            <person name="Nakamura Y."/>
            <person name="Ohara O."/>
            <person name="Isogai T."/>
            <person name="Sugano S."/>
        </authorList>
    </citation>
    <scope>NUCLEOTIDE SEQUENCE [LARGE SCALE MRNA]</scope>
    <source>
        <tissue>Thalamus</tissue>
    </source>
</reference>
<reference key="4">
    <citation type="submission" date="2004-06" db="EMBL/GenBank/DDBJ databases">
        <title>Cloning of human full open reading frames in Gateway(TM) system entry vector (pDONR201).</title>
        <authorList>
            <person name="Ebert L."/>
            <person name="Schick M."/>
            <person name="Neubert P."/>
            <person name="Schatten R."/>
            <person name="Henze S."/>
            <person name="Korn B."/>
        </authorList>
    </citation>
    <scope>NUCLEOTIDE SEQUENCE [LARGE SCALE MRNA] (ISOFORM 1)</scope>
</reference>
<reference key="5">
    <citation type="submission" date="2005-04" db="EMBL/GenBank/DDBJ databases">
        <authorList>
            <person name="Suzuki Y."/>
            <person name="Sugano S."/>
            <person name="Totoki Y."/>
            <person name="Toyoda A."/>
            <person name="Takeda T."/>
            <person name="Sakaki Y."/>
            <person name="Tanaka A."/>
            <person name="Yokoyama S."/>
        </authorList>
    </citation>
    <scope>NUCLEOTIDE SEQUENCE [LARGE SCALE MRNA] (ISOFORM 1)</scope>
    <source>
        <tissue>Cerebellum</tissue>
    </source>
</reference>
<reference key="6">
    <citation type="journal article" date="2006" name="Nature">
        <title>The DNA sequence, annotation and analysis of human chromosome 3.</title>
        <authorList>
            <person name="Muzny D.M."/>
            <person name="Scherer S.E."/>
            <person name="Kaul R."/>
            <person name="Wang J."/>
            <person name="Yu J."/>
            <person name="Sudbrak R."/>
            <person name="Buhay C.J."/>
            <person name="Chen R."/>
            <person name="Cree A."/>
            <person name="Ding Y."/>
            <person name="Dugan-Rocha S."/>
            <person name="Gill R."/>
            <person name="Gunaratne P."/>
            <person name="Harris R.A."/>
            <person name="Hawes A.C."/>
            <person name="Hernandez J."/>
            <person name="Hodgson A.V."/>
            <person name="Hume J."/>
            <person name="Jackson A."/>
            <person name="Khan Z.M."/>
            <person name="Kovar-Smith C."/>
            <person name="Lewis L.R."/>
            <person name="Lozado R.J."/>
            <person name="Metzker M.L."/>
            <person name="Milosavljevic A."/>
            <person name="Miner G.R."/>
            <person name="Morgan M.B."/>
            <person name="Nazareth L.V."/>
            <person name="Scott G."/>
            <person name="Sodergren E."/>
            <person name="Song X.-Z."/>
            <person name="Steffen D."/>
            <person name="Wei S."/>
            <person name="Wheeler D.A."/>
            <person name="Wright M.W."/>
            <person name="Worley K.C."/>
            <person name="Yuan Y."/>
            <person name="Zhang Z."/>
            <person name="Adams C.Q."/>
            <person name="Ansari-Lari M.A."/>
            <person name="Ayele M."/>
            <person name="Brown M.J."/>
            <person name="Chen G."/>
            <person name="Chen Z."/>
            <person name="Clendenning J."/>
            <person name="Clerc-Blankenburg K.P."/>
            <person name="Chen R."/>
            <person name="Chen Z."/>
            <person name="Davis C."/>
            <person name="Delgado O."/>
            <person name="Dinh H.H."/>
            <person name="Dong W."/>
            <person name="Draper H."/>
            <person name="Ernst S."/>
            <person name="Fu G."/>
            <person name="Gonzalez-Garay M.L."/>
            <person name="Garcia D.K."/>
            <person name="Gillett W."/>
            <person name="Gu J."/>
            <person name="Hao B."/>
            <person name="Haugen E."/>
            <person name="Havlak P."/>
            <person name="He X."/>
            <person name="Hennig S."/>
            <person name="Hu S."/>
            <person name="Huang W."/>
            <person name="Jackson L.R."/>
            <person name="Jacob L.S."/>
            <person name="Kelly S.H."/>
            <person name="Kube M."/>
            <person name="Levy R."/>
            <person name="Li Z."/>
            <person name="Liu B."/>
            <person name="Liu J."/>
            <person name="Liu W."/>
            <person name="Lu J."/>
            <person name="Maheshwari M."/>
            <person name="Nguyen B.-V."/>
            <person name="Okwuonu G.O."/>
            <person name="Palmeiri A."/>
            <person name="Pasternak S."/>
            <person name="Perez L.M."/>
            <person name="Phelps K.A."/>
            <person name="Plopper F.J."/>
            <person name="Qiang B."/>
            <person name="Raymond C."/>
            <person name="Rodriguez R."/>
            <person name="Saenphimmachak C."/>
            <person name="Santibanez J."/>
            <person name="Shen H."/>
            <person name="Shen Y."/>
            <person name="Subramanian S."/>
            <person name="Tabor P.E."/>
            <person name="Verduzco D."/>
            <person name="Waldron L."/>
            <person name="Wang J."/>
            <person name="Wang J."/>
            <person name="Wang Q."/>
            <person name="Williams G.A."/>
            <person name="Wong G.K.-S."/>
            <person name="Yao Z."/>
            <person name="Zhang J."/>
            <person name="Zhang X."/>
            <person name="Zhao G."/>
            <person name="Zhou J."/>
            <person name="Zhou Y."/>
            <person name="Nelson D."/>
            <person name="Lehrach H."/>
            <person name="Reinhardt R."/>
            <person name="Naylor S.L."/>
            <person name="Yang H."/>
            <person name="Olson M."/>
            <person name="Weinstock G."/>
            <person name="Gibbs R.A."/>
        </authorList>
    </citation>
    <scope>NUCLEOTIDE SEQUENCE [LARGE SCALE GENOMIC DNA]</scope>
</reference>
<reference key="7">
    <citation type="journal article" date="2004" name="Genome Res.">
        <title>The status, quality, and expansion of the NIH full-length cDNA project: the Mammalian Gene Collection (MGC).</title>
        <authorList>
            <consortium name="The MGC Project Team"/>
        </authorList>
    </citation>
    <scope>NUCLEOTIDE SEQUENCE [LARGE SCALE MRNA] (ISOFORM 1)</scope>
    <source>
        <tissue>Cervix</tissue>
    </source>
</reference>
<reference key="8">
    <citation type="journal article" date="2003" name="Proc. Natl. Acad. Sci. U.S.A.">
        <title>Divergent retroviral late-budding domains recruit vacuolar protein sorting factors by using alternative adaptor proteins.</title>
        <authorList>
            <person name="Martin-Serrano J."/>
            <person name="Yarovoy A."/>
            <person name="Perez-Caballero D."/>
            <person name="Bieniasz P.D."/>
        </authorList>
    </citation>
    <scope>INTERACTION WITH CHMP2A</scope>
</reference>
<reference key="9">
    <citation type="journal article" date="2003" name="Proc. Natl. Acad. Sci. U.S.A.">
        <authorList>
            <person name="Martin-Serrano J."/>
            <person name="Yarovoy A."/>
            <person name="Perez-Caballero D."/>
            <person name="Bieniasz P.D."/>
        </authorList>
    </citation>
    <scope>ERRATUM OF PUBMED:14519844</scope>
</reference>
<reference key="10">
    <citation type="journal article" date="2005" name="Nat. Genet.">
        <title>Mutations in the endosomal ESCRTIII-complex subunit CHMP2B in frontotemporal dementia.</title>
        <authorList>
            <person name="Skibinski G."/>
            <person name="Parkinson N.J."/>
            <person name="Brown J.M."/>
            <person name="Chakrabarti L."/>
            <person name="Lloyd S.L."/>
            <person name="Hummerich H."/>
            <person name="Nielsen J.E."/>
            <person name="Hodges J.R."/>
            <person name="Spillantini M.G."/>
            <person name="Thusgaard T."/>
            <person name="Brandner S."/>
            <person name="Brun A."/>
            <person name="Rossor M.N."/>
            <person name="Gade A."/>
            <person name="Johannsen P."/>
            <person name="Soerensen S.A."/>
            <person name="Gydesen S."/>
            <person name="Fisher E.M.C."/>
            <person name="Collinge J."/>
        </authorList>
    </citation>
    <scope>SUBCELLULAR LOCATION</scope>
    <scope>TISSUE SPECIFICITY</scope>
    <scope>VARIANT FTDALS7 TYR-148</scope>
</reference>
<reference key="11">
    <citation type="journal article" date="2006" name="Nat. Biotechnol.">
        <title>A probability-based approach for high-throughput protein phosphorylation analysis and site localization.</title>
        <authorList>
            <person name="Beausoleil S.A."/>
            <person name="Villen J."/>
            <person name="Gerber S.A."/>
            <person name="Rush J."/>
            <person name="Gygi S.P."/>
        </authorList>
    </citation>
    <scope>PHOSPHORYLATION [LARGE SCALE ANALYSIS] AT SER-199</scope>
    <scope>IDENTIFICATION BY MASS SPECTROMETRY [LARGE SCALE ANALYSIS]</scope>
    <source>
        <tissue>Cervix carcinoma</tissue>
    </source>
</reference>
<reference key="12">
    <citation type="journal article" date="2008" name="Proc. Natl. Acad. Sci. U.S.A.">
        <title>A quantitative atlas of mitotic phosphorylation.</title>
        <authorList>
            <person name="Dephoure N."/>
            <person name="Zhou C."/>
            <person name="Villen J."/>
            <person name="Beausoleil S.A."/>
            <person name="Bakalarski C.E."/>
            <person name="Elledge S.J."/>
            <person name="Gygi S.P."/>
        </authorList>
    </citation>
    <scope>PHOSPHORYLATION [LARGE SCALE ANALYSIS] AT SER-199</scope>
    <scope>IDENTIFICATION BY MASS SPECTROMETRY [LARGE SCALE ANALYSIS]</scope>
    <source>
        <tissue>Cervix carcinoma</tissue>
    </source>
</reference>
<reference key="13">
    <citation type="journal article" date="2009" name="Anal. Chem.">
        <title>Lys-N and trypsin cover complementary parts of the phosphoproteome in a refined SCX-based approach.</title>
        <authorList>
            <person name="Gauci S."/>
            <person name="Helbig A.O."/>
            <person name="Slijper M."/>
            <person name="Krijgsveld J."/>
            <person name="Heck A.J."/>
            <person name="Mohammed S."/>
        </authorList>
    </citation>
    <scope>IDENTIFICATION BY MASS SPECTROMETRY [LARGE SCALE ANALYSIS]</scope>
</reference>
<reference key="14">
    <citation type="journal article" date="2010" name="Sci. Signal.">
        <title>Quantitative phosphoproteomics reveals widespread full phosphorylation site occupancy during mitosis.</title>
        <authorList>
            <person name="Olsen J.V."/>
            <person name="Vermeulen M."/>
            <person name="Santamaria A."/>
            <person name="Kumar C."/>
            <person name="Miller M.L."/>
            <person name="Jensen L.J."/>
            <person name="Gnad F."/>
            <person name="Cox J."/>
            <person name="Jensen T.S."/>
            <person name="Nigg E.A."/>
            <person name="Brunak S."/>
            <person name="Mann M."/>
        </authorList>
    </citation>
    <scope>PHOSPHORYLATION [LARGE SCALE ANALYSIS] AT SER-199</scope>
    <scope>IDENTIFICATION BY MASS SPECTROMETRY [LARGE SCALE ANALYSIS]</scope>
    <source>
        <tissue>Cervix carcinoma</tissue>
    </source>
</reference>
<reference key="15">
    <citation type="journal article" date="2011" name="BMC Syst. Biol.">
        <title>Initial characterization of the human central proteome.</title>
        <authorList>
            <person name="Burkard T.R."/>
            <person name="Planyavsky M."/>
            <person name="Kaupe I."/>
            <person name="Breitwieser F.P."/>
            <person name="Buerckstuemmer T."/>
            <person name="Bennett K.L."/>
            <person name="Superti-Furga G."/>
            <person name="Colinge J."/>
        </authorList>
    </citation>
    <scope>IDENTIFICATION BY MASS SPECTROMETRY [LARGE SCALE ANALYSIS]</scope>
</reference>
<reference key="16">
    <citation type="journal article" date="2011" name="Sci. Signal.">
        <title>System-wide temporal characterization of the proteome and phosphoproteome of human embryonic stem cell differentiation.</title>
        <authorList>
            <person name="Rigbolt K.T."/>
            <person name="Prokhorova T.A."/>
            <person name="Akimov V."/>
            <person name="Henningsen J."/>
            <person name="Johansen P.T."/>
            <person name="Kratchmarova I."/>
            <person name="Kassem M."/>
            <person name="Mann M."/>
            <person name="Olsen J.V."/>
            <person name="Blagoev B."/>
        </authorList>
    </citation>
    <scope>PHOSPHORYLATION [LARGE SCALE ANALYSIS] AT SER-199</scope>
    <scope>IDENTIFICATION BY MASS SPECTROMETRY [LARGE SCALE ANALYSIS]</scope>
</reference>
<reference key="17">
    <citation type="journal article" date="2012" name="Proc. Natl. Acad. Sci. U.S.A.">
        <title>N-terminal acetylome analyses and functional insights of the N-terminal acetyltransferase NatB.</title>
        <authorList>
            <person name="Van Damme P."/>
            <person name="Lasa M."/>
            <person name="Polevoda B."/>
            <person name="Gazquez C."/>
            <person name="Elosegui-Artola A."/>
            <person name="Kim D.S."/>
            <person name="De Juan-Pardo E."/>
            <person name="Demeyer K."/>
            <person name="Hole K."/>
            <person name="Larrea E."/>
            <person name="Timmerman E."/>
            <person name="Prieto J."/>
            <person name="Arnesen T."/>
            <person name="Sherman F."/>
            <person name="Gevaert K."/>
            <person name="Aldabe R."/>
        </authorList>
    </citation>
    <scope>ACETYLATION [LARGE SCALE ANALYSIS] AT ALA-2</scope>
    <scope>CLEAVAGE OF INITIATOR METHIONINE [LARGE SCALE ANALYSIS]</scope>
    <scope>IDENTIFICATION BY MASS SPECTROMETRY [LARGE SCALE ANALYSIS]</scope>
</reference>
<reference key="18">
    <citation type="journal article" date="2013" name="J. Proteome Res.">
        <title>Toward a comprehensive characterization of a human cancer cell phosphoproteome.</title>
        <authorList>
            <person name="Zhou H."/>
            <person name="Di Palma S."/>
            <person name="Preisinger C."/>
            <person name="Peng M."/>
            <person name="Polat A.N."/>
            <person name="Heck A.J."/>
            <person name="Mohammed S."/>
        </authorList>
    </citation>
    <scope>PHOSPHORYLATION [LARGE SCALE ANALYSIS] AT SER-199</scope>
    <scope>IDENTIFICATION BY MASS SPECTROMETRY [LARGE SCALE ANALYSIS]</scope>
    <source>
        <tissue>Cervix carcinoma</tissue>
        <tissue>Erythroleukemia</tissue>
    </source>
</reference>
<reference key="19">
    <citation type="journal article" date="2014" name="J. Proteomics">
        <title>An enzyme assisted RP-RPLC approach for in-depth analysis of human liver phosphoproteome.</title>
        <authorList>
            <person name="Bian Y."/>
            <person name="Song C."/>
            <person name="Cheng K."/>
            <person name="Dong M."/>
            <person name="Wang F."/>
            <person name="Huang J."/>
            <person name="Sun D."/>
            <person name="Wang L."/>
            <person name="Ye M."/>
            <person name="Zou H."/>
        </authorList>
    </citation>
    <scope>IDENTIFICATION BY MASS SPECTROMETRY [LARGE SCALE ANALYSIS]</scope>
    <source>
        <tissue>Liver</tissue>
    </source>
</reference>
<reference key="20">
    <citation type="journal article" date="2007" name="Nature">
        <title>ESCRT-III recognition by VPS4 ATPases.</title>
        <authorList>
            <person name="Stuchell-Brereton M.D."/>
            <person name="Skalicky J.J."/>
            <person name="Kieffer C."/>
            <person name="Karren M.A."/>
            <person name="Ghaffarian S."/>
            <person name="Sundquist W.I."/>
        </authorList>
    </citation>
    <scope>STRUCTURE BY NMR OF 195-213 IN COMPLEX WITH VPS4B</scope>
    <scope>INTERACTION WITH VPS4A</scope>
</reference>
<reference key="21">
    <citation type="journal article" date="2006" name="Neurology">
        <title>ALS phenotypes with mutations in CHMP2B (charged multivesicular body protein 2B).</title>
        <authorList>
            <person name="Parkinson N."/>
            <person name="Ince P.G."/>
            <person name="Smith M.O."/>
            <person name="Highley R."/>
            <person name="Skibinski G."/>
            <person name="Andersen P.M."/>
            <person name="Morrison K.E."/>
            <person name="Pall H.S."/>
            <person name="Hardiman O."/>
            <person name="Collinge J."/>
            <person name="Shaw P.J."/>
            <person name="Fisher E.M."/>
        </authorList>
    </citation>
    <scope>VARIANT FTDALS7 HIS-206</scope>
    <scope>VARIANT VAL-29</scope>
</reference>
<reference key="22">
    <citation type="journal article" date="2010" name="PLoS ONE">
        <title>Mutations in CHMP2B in lower motor neuron predominant amyotrophic lateral sclerosis (ALS).</title>
        <authorList>
            <person name="Cox L.E."/>
            <person name="Ferraiuolo L."/>
            <person name="Goodall E.F."/>
            <person name="Heath P.R."/>
            <person name="Higginbottom A."/>
            <person name="Mortiboys H."/>
            <person name="Hollinger H.C."/>
            <person name="Hartley J.A."/>
            <person name="Brockington A."/>
            <person name="Burness C.E."/>
            <person name="Morrison K.E."/>
            <person name="Wharton S.B."/>
            <person name="Grierson A.J."/>
            <person name="Ince P.G."/>
            <person name="Kirby J."/>
            <person name="Shaw P.J."/>
        </authorList>
    </citation>
    <scope>VARIANTS FTDALS7 VAL-29; ASN-104 AND HIS-206</scope>
    <scope>CHARACTERIZATION OF VARIANTS FTDALS7 VAL-29; ASN-104 AND HIS-206</scope>
</reference>
<feature type="initiator methionine" description="Removed" evidence="15">
    <location>
        <position position="1"/>
    </location>
</feature>
<feature type="chain" id="PRO_0000211469" description="Charged multivesicular body protein 2b">
    <location>
        <begin position="2"/>
        <end position="213"/>
    </location>
</feature>
<feature type="region of interest" description="Disordered" evidence="3">
    <location>
        <begin position="179"/>
        <end position="199"/>
    </location>
</feature>
<feature type="coiled-coil region" evidence="2">
    <location>
        <begin position="25"/>
        <end position="55"/>
    </location>
</feature>
<feature type="short sequence motif" description="MIT-interacting motif">
    <location>
        <begin position="201"/>
        <end position="211"/>
    </location>
</feature>
<feature type="compositionally biased region" description="Low complexity" evidence="3">
    <location>
        <begin position="179"/>
        <end position="194"/>
    </location>
</feature>
<feature type="modified residue" description="N-acetylalanine" evidence="15">
    <location>
        <position position="2"/>
    </location>
</feature>
<feature type="modified residue" description="Phosphoserine" evidence="11 12 13 14 16">
    <location>
        <position position="199"/>
    </location>
</feature>
<feature type="splice variant" id="VSP_045142" description="In isoform 2." evidence="9">
    <original>MASLFKKKTVDDVIKEQNRELRGTQRAIIRDRAALEKQEKQL</original>
    <variation>M</variation>
    <location>
        <begin position="1"/>
        <end position="42"/>
    </location>
</feature>
<feature type="sequence variant" id="VAR_038373" description="In FTDALS7; cells expressing the mutant protein have large cytoplasmic vacuoles with an accumulation of the mutant protein on the outer membrane termed halos; cells with the mutant protein also have aberrant localization of CD63 and an increase in MAP1LC3A1 overall indicating a defect in the autophagic pathway; dbSNP:rs63750818." evidence="6 8">
    <original>I</original>
    <variation>V</variation>
    <location>
        <position position="29"/>
    </location>
</feature>
<feature type="sequence variant" id="VAR_068689" description="In FTDALS7; cells expressing the mutant protein have large cytoplasmic vacuoles with an accumulation of the mutant protein on the outer membrane termed halos; cells with the mutant protein also have aberrant localization of CD63 and an increase in MAP1LC3A overall indicating a defect in the autophagic pathway; dbSNP:rs281864934." evidence="8">
    <original>T</original>
    <variation>N</variation>
    <location>
        <position position="104"/>
    </location>
</feature>
<feature type="sequence variant" id="VAR_023383" description="In FTDALS7; dbSNP:rs63750653." evidence="5">
    <original>D</original>
    <variation>Y</variation>
    <location>
        <position position="148"/>
    </location>
</feature>
<feature type="sequence variant" id="VAR_038374" description="In FTDALS7; cells expressing the mutant protein have large cytoplasmic vacuoles with an accumulation of the mutant protein on the outer membrane termed halos; cells with the mutant protein also have aberrant localization of CD63 and an increase in MAP1LC3A overall indicating a defect in the autophagic pathway; dbSNP:rs63751126." evidence="6 8">
    <original>Q</original>
    <variation>H</variation>
    <location>
        <position position="206"/>
    </location>
</feature>
<feature type="sequence conflict" description="In Ref. 2; CAB45721 and 3; CAG38487." evidence="9" ref="2 3">
    <original>K</original>
    <variation>R</variation>
    <location>
        <position position="8"/>
    </location>
</feature>
<feature type="sequence conflict" description="In Ref. 5; BAD96374." evidence="9" ref="5">
    <original>N</original>
    <variation>S</variation>
    <location>
        <position position="113"/>
    </location>
</feature>
<feature type="sequence conflict" description="In Ref. 2; CAB45721 and 3; CAG38487." evidence="9" ref="2 3">
    <original>E</original>
    <variation>V</variation>
    <location>
        <position position="201"/>
    </location>
</feature>
<feature type="helix" evidence="17">
    <location>
        <begin position="201"/>
        <end position="210"/>
    </location>
</feature>
<dbReference type="EMBL" id="AF151842">
    <property type="protein sequence ID" value="AAD34079.1"/>
    <property type="molecule type" value="mRNA"/>
</dbReference>
<dbReference type="EMBL" id="AL080122">
    <property type="protein sequence ID" value="CAB45721.1"/>
    <property type="molecule type" value="mRNA"/>
</dbReference>
<dbReference type="EMBL" id="AK296072">
    <property type="protein sequence ID" value="BAG58830.1"/>
    <property type="molecule type" value="mRNA"/>
</dbReference>
<dbReference type="EMBL" id="CR533456">
    <property type="protein sequence ID" value="CAG38487.1"/>
    <property type="molecule type" value="mRNA"/>
</dbReference>
<dbReference type="EMBL" id="AK222654">
    <property type="protein sequence ID" value="BAD96374.1"/>
    <property type="molecule type" value="mRNA"/>
</dbReference>
<dbReference type="EMBL" id="AC123511">
    <property type="status" value="NOT_ANNOTATED_CDS"/>
    <property type="molecule type" value="Genomic_DNA"/>
</dbReference>
<dbReference type="EMBL" id="AC130885">
    <property type="status" value="NOT_ANNOTATED_CDS"/>
    <property type="molecule type" value="Genomic_DNA"/>
</dbReference>
<dbReference type="EMBL" id="BC001553">
    <property type="protein sequence ID" value="AAH01553.1"/>
    <property type="molecule type" value="mRNA"/>
</dbReference>
<dbReference type="CCDS" id="CCDS2918.1">
    <molecule id="Q9UQN3-1"/>
</dbReference>
<dbReference type="CCDS" id="CCDS58840.1">
    <molecule id="Q9UQN3-2"/>
</dbReference>
<dbReference type="PIR" id="T12468">
    <property type="entry name" value="T12468"/>
</dbReference>
<dbReference type="RefSeq" id="NP_001231573.1">
    <molecule id="Q9UQN3-2"/>
    <property type="nucleotide sequence ID" value="NM_001244644.2"/>
</dbReference>
<dbReference type="RefSeq" id="NP_054762.2">
    <molecule id="Q9UQN3-1"/>
    <property type="nucleotide sequence ID" value="NM_014043.3"/>
</dbReference>
<dbReference type="PDB" id="2JQK">
    <property type="method" value="NMR"/>
    <property type="chains" value="B=195-213"/>
</dbReference>
<dbReference type="PDBsum" id="2JQK"/>
<dbReference type="SMR" id="Q9UQN3"/>
<dbReference type="BioGRID" id="117462">
    <property type="interactions" value="133"/>
</dbReference>
<dbReference type="ComplexPortal" id="CPX-329">
    <property type="entry name" value="ESCRT-III complex"/>
</dbReference>
<dbReference type="CORUM" id="Q9UQN3"/>
<dbReference type="DIP" id="DIP-50766N"/>
<dbReference type="FunCoup" id="Q9UQN3">
    <property type="interactions" value="1600"/>
</dbReference>
<dbReference type="IntAct" id="Q9UQN3">
    <property type="interactions" value="65"/>
</dbReference>
<dbReference type="MINT" id="Q9UQN3"/>
<dbReference type="STRING" id="9606.ENSP00000263780"/>
<dbReference type="GlyGen" id="Q9UQN3">
    <property type="glycosylation" value="2 sites, 1 O-linked glycan (2 sites)"/>
</dbReference>
<dbReference type="iPTMnet" id="Q9UQN3"/>
<dbReference type="MetOSite" id="Q9UQN3"/>
<dbReference type="PhosphoSitePlus" id="Q9UQN3"/>
<dbReference type="BioMuta" id="CHMP2B"/>
<dbReference type="DMDM" id="73917746"/>
<dbReference type="jPOST" id="Q9UQN3"/>
<dbReference type="MassIVE" id="Q9UQN3"/>
<dbReference type="PaxDb" id="9606-ENSP00000263780"/>
<dbReference type="PeptideAtlas" id="Q9UQN3"/>
<dbReference type="ProteomicsDB" id="4379"/>
<dbReference type="ProteomicsDB" id="85561">
    <molecule id="Q9UQN3-1"/>
</dbReference>
<dbReference type="Pumba" id="Q9UQN3"/>
<dbReference type="Antibodypedia" id="32034">
    <property type="antibodies" value="280 antibodies from 34 providers"/>
</dbReference>
<dbReference type="DNASU" id="25978"/>
<dbReference type="YCharOS" id="Q9UQN3">
    <property type="antibodies" value="Tested 8 antibodies from 6 manufacturers"/>
</dbReference>
<dbReference type="Ensembl" id="ENST00000263780.9">
    <molecule id="Q9UQN3-1"/>
    <property type="protein sequence ID" value="ENSP00000263780.4"/>
    <property type="gene ID" value="ENSG00000083937.10"/>
</dbReference>
<dbReference type="Ensembl" id="ENST00000471660.5">
    <molecule id="Q9UQN3-2"/>
    <property type="protein sequence ID" value="ENSP00000419998.1"/>
    <property type="gene ID" value="ENSG00000083937.10"/>
</dbReference>
<dbReference type="GeneID" id="25978"/>
<dbReference type="KEGG" id="hsa:25978"/>
<dbReference type="MANE-Select" id="ENST00000263780.9">
    <property type="protein sequence ID" value="ENSP00000263780.4"/>
    <property type="RefSeq nucleotide sequence ID" value="NM_014043.4"/>
    <property type="RefSeq protein sequence ID" value="NP_054762.2"/>
</dbReference>
<dbReference type="UCSC" id="uc003dqp.5">
    <molecule id="Q9UQN3-1"/>
    <property type="organism name" value="human"/>
</dbReference>
<dbReference type="AGR" id="HGNC:24537"/>
<dbReference type="CTD" id="25978"/>
<dbReference type="DisGeNET" id="25978"/>
<dbReference type="GeneCards" id="CHMP2B"/>
<dbReference type="GeneReviews" id="CHMP2B"/>
<dbReference type="HGNC" id="HGNC:24537">
    <property type="gene designation" value="CHMP2B"/>
</dbReference>
<dbReference type="HPA" id="ENSG00000083937">
    <property type="expression patterns" value="Low tissue specificity"/>
</dbReference>
<dbReference type="MalaCards" id="CHMP2B"/>
<dbReference type="MIM" id="600795">
    <property type="type" value="phenotype"/>
</dbReference>
<dbReference type="MIM" id="609512">
    <property type="type" value="gene"/>
</dbReference>
<dbReference type="neXtProt" id="NX_Q9UQN3"/>
<dbReference type="OpenTargets" id="ENSG00000083937"/>
<dbReference type="Orphanet" id="803">
    <property type="disease" value="Amyotrophic lateral sclerosis"/>
</dbReference>
<dbReference type="Orphanet" id="275864">
    <property type="disease" value="Behavioral variant of frontotemporal dementia"/>
</dbReference>
<dbReference type="Orphanet" id="100070">
    <property type="disease" value="Progressive non-fluent aphasia"/>
</dbReference>
<dbReference type="Orphanet" id="100069">
    <property type="disease" value="Semantic dementia"/>
</dbReference>
<dbReference type="PharmGKB" id="PA142672112"/>
<dbReference type="VEuPathDB" id="HostDB:ENSG00000083937"/>
<dbReference type="eggNOG" id="KOG3231">
    <property type="taxonomic scope" value="Eukaryota"/>
</dbReference>
<dbReference type="GeneTree" id="ENSGT00950000182832"/>
<dbReference type="HOGENOM" id="CLU_069208_1_2_1"/>
<dbReference type="InParanoid" id="Q9UQN3"/>
<dbReference type="OMA" id="NREACKV"/>
<dbReference type="OrthoDB" id="5594417at2759"/>
<dbReference type="PAN-GO" id="Q9UQN3">
    <property type="GO annotations" value="5 GO annotations based on evolutionary models"/>
</dbReference>
<dbReference type="PhylomeDB" id="Q9UQN3"/>
<dbReference type="TreeFam" id="TF314163"/>
<dbReference type="PathwayCommons" id="Q9UQN3"/>
<dbReference type="Reactome" id="R-HSA-162588">
    <property type="pathway name" value="Budding and maturation of HIV virion"/>
</dbReference>
<dbReference type="Reactome" id="R-HSA-1632852">
    <property type="pathway name" value="Macroautophagy"/>
</dbReference>
<dbReference type="Reactome" id="R-HSA-5620971">
    <property type="pathway name" value="Pyroptosis"/>
</dbReference>
<dbReference type="Reactome" id="R-HSA-917729">
    <property type="pathway name" value="Endosomal Sorting Complex Required For Transport (ESCRT)"/>
</dbReference>
<dbReference type="Reactome" id="R-HSA-9610379">
    <property type="pathway name" value="HCMV Late Events"/>
</dbReference>
<dbReference type="Reactome" id="R-HSA-9615710">
    <property type="pathway name" value="Late endosomal microautophagy"/>
</dbReference>
<dbReference type="Reactome" id="R-HSA-9668328">
    <property type="pathway name" value="Sealing of the nuclear envelope (NE) by ESCRT-III"/>
</dbReference>
<dbReference type="Reactome" id="R-HSA-9679504">
    <property type="pathway name" value="Translation of Replicase and Assembly of the Replication Transcription Complex"/>
</dbReference>
<dbReference type="Reactome" id="R-HSA-9694676">
    <property type="pathway name" value="Translation of Replicase and Assembly of the Replication Transcription Complex"/>
</dbReference>
<dbReference type="SignaLink" id="Q9UQN3"/>
<dbReference type="SIGNOR" id="Q9UQN3"/>
<dbReference type="BioGRID-ORCS" id="25978">
    <property type="hits" value="12 hits in 1153 CRISPR screens"/>
</dbReference>
<dbReference type="ChiTaRS" id="CHMP2B">
    <property type="organism name" value="human"/>
</dbReference>
<dbReference type="EvolutionaryTrace" id="Q9UQN3"/>
<dbReference type="GeneWiki" id="CHMP2B"/>
<dbReference type="GenomeRNAi" id="25978"/>
<dbReference type="Pharos" id="Q9UQN3">
    <property type="development level" value="Tbio"/>
</dbReference>
<dbReference type="PRO" id="PR:Q9UQN3"/>
<dbReference type="Proteomes" id="UP000005640">
    <property type="component" value="Chromosome 3"/>
</dbReference>
<dbReference type="RNAct" id="Q9UQN3">
    <property type="molecule type" value="protein"/>
</dbReference>
<dbReference type="Bgee" id="ENSG00000083937">
    <property type="expression patterns" value="Expressed in medial globus pallidus and 219 other cell types or tissues"/>
</dbReference>
<dbReference type="ExpressionAtlas" id="Q9UQN3">
    <property type="expression patterns" value="baseline and differential"/>
</dbReference>
<dbReference type="GO" id="GO:1904930">
    <property type="term" value="C:amphisome membrane"/>
    <property type="evidence" value="ECO:0000314"/>
    <property type="project" value="ComplexPortal"/>
</dbReference>
<dbReference type="GO" id="GO:0000421">
    <property type="term" value="C:autophagosome membrane"/>
    <property type="evidence" value="ECO:0000314"/>
    <property type="project" value="ComplexPortal"/>
</dbReference>
<dbReference type="GO" id="GO:0005737">
    <property type="term" value="C:cytoplasm"/>
    <property type="evidence" value="ECO:0000314"/>
    <property type="project" value="UniProtKB"/>
</dbReference>
<dbReference type="GO" id="GO:0005829">
    <property type="term" value="C:cytosol"/>
    <property type="evidence" value="ECO:0000314"/>
    <property type="project" value="HPA"/>
</dbReference>
<dbReference type="GO" id="GO:0000815">
    <property type="term" value="C:ESCRT III complex"/>
    <property type="evidence" value="ECO:0000314"/>
    <property type="project" value="UniProtKB"/>
</dbReference>
<dbReference type="GO" id="GO:0070062">
    <property type="term" value="C:extracellular exosome"/>
    <property type="evidence" value="ECO:0007005"/>
    <property type="project" value="UniProtKB"/>
</dbReference>
<dbReference type="GO" id="GO:0098978">
    <property type="term" value="C:glutamatergic synapse"/>
    <property type="evidence" value="ECO:0007669"/>
    <property type="project" value="Ensembl"/>
</dbReference>
<dbReference type="GO" id="GO:0000776">
    <property type="term" value="C:kinetochore"/>
    <property type="evidence" value="ECO:0000314"/>
    <property type="project" value="ComplexPortal"/>
</dbReference>
<dbReference type="GO" id="GO:0005828">
    <property type="term" value="C:kinetochore microtubule"/>
    <property type="evidence" value="ECO:0000314"/>
    <property type="project" value="ComplexPortal"/>
</dbReference>
<dbReference type="GO" id="GO:0005765">
    <property type="term" value="C:lysosomal membrane"/>
    <property type="evidence" value="ECO:0000314"/>
    <property type="project" value="ComplexPortal"/>
</dbReference>
<dbReference type="GO" id="GO:0030496">
    <property type="term" value="C:midbody"/>
    <property type="evidence" value="ECO:0000314"/>
    <property type="project" value="ComplexPortal"/>
</dbReference>
<dbReference type="GO" id="GO:0005771">
    <property type="term" value="C:multivesicular body"/>
    <property type="evidence" value="ECO:0000318"/>
    <property type="project" value="GO_Central"/>
</dbReference>
<dbReference type="GO" id="GO:0032585">
    <property type="term" value="C:multivesicular body membrane"/>
    <property type="evidence" value="ECO:0000314"/>
    <property type="project" value="ComplexPortal"/>
</dbReference>
<dbReference type="GO" id="GO:0005643">
    <property type="term" value="C:nuclear pore"/>
    <property type="evidence" value="ECO:0000314"/>
    <property type="project" value="ComplexPortal"/>
</dbReference>
<dbReference type="GO" id="GO:0005886">
    <property type="term" value="C:plasma membrane"/>
    <property type="evidence" value="ECO:0000314"/>
    <property type="project" value="ComplexPortal"/>
</dbReference>
<dbReference type="GO" id="GO:0014069">
    <property type="term" value="C:postsynaptic density"/>
    <property type="evidence" value="ECO:0007669"/>
    <property type="project" value="Ensembl"/>
</dbReference>
<dbReference type="GO" id="GO:0045296">
    <property type="term" value="F:cadherin binding"/>
    <property type="evidence" value="ECO:0007005"/>
    <property type="project" value="BHF-UCL"/>
</dbReference>
<dbReference type="GO" id="GO:0019904">
    <property type="term" value="F:protein domain specific binding"/>
    <property type="evidence" value="ECO:0000353"/>
    <property type="project" value="UniProtKB"/>
</dbReference>
<dbReference type="GO" id="GO:0097352">
    <property type="term" value="P:autophagosome maturation"/>
    <property type="evidence" value="ECO:0000315"/>
    <property type="project" value="ComplexPortal"/>
</dbReference>
<dbReference type="GO" id="GO:0006914">
    <property type="term" value="P:autophagy"/>
    <property type="evidence" value="ECO:0000315"/>
    <property type="project" value="ComplexPortal"/>
</dbReference>
<dbReference type="GO" id="GO:0050890">
    <property type="term" value="P:cognition"/>
    <property type="evidence" value="ECO:0000315"/>
    <property type="project" value="UniProtKB"/>
</dbReference>
<dbReference type="GO" id="GO:0007032">
    <property type="term" value="P:endosome organization"/>
    <property type="evidence" value="ECO:0000315"/>
    <property type="project" value="UniProtKB"/>
</dbReference>
<dbReference type="GO" id="GO:0032509">
    <property type="term" value="P:endosome transport via multivesicular body sorting pathway"/>
    <property type="evidence" value="ECO:0000318"/>
    <property type="project" value="GO_Central"/>
</dbReference>
<dbReference type="GO" id="GO:1904903">
    <property type="term" value="P:ESCRT III complex disassembly"/>
    <property type="evidence" value="ECO:0000303"/>
    <property type="project" value="ParkinsonsUK-UCL"/>
</dbReference>
<dbReference type="GO" id="GO:1902774">
    <property type="term" value="P:late endosome to lysosome transport"/>
    <property type="evidence" value="ECO:0000315"/>
    <property type="project" value="ComplexPortal"/>
</dbReference>
<dbReference type="GO" id="GO:0045324">
    <property type="term" value="P:late endosome to vacuole transport"/>
    <property type="evidence" value="ECO:0000318"/>
    <property type="project" value="GO_Central"/>
</dbReference>
<dbReference type="GO" id="GO:0016236">
    <property type="term" value="P:macroautophagy"/>
    <property type="evidence" value="ECO:0000304"/>
    <property type="project" value="ParkinsonsUK-UCL"/>
</dbReference>
<dbReference type="GO" id="GO:0090148">
    <property type="term" value="P:membrane fission"/>
    <property type="evidence" value="ECO:0000303"/>
    <property type="project" value="ComplexPortal"/>
</dbReference>
<dbReference type="GO" id="GO:0061952">
    <property type="term" value="P:midbody abscission"/>
    <property type="evidence" value="ECO:0000315"/>
    <property type="project" value="UniProtKB"/>
</dbReference>
<dbReference type="GO" id="GO:0007080">
    <property type="term" value="P:mitotic metaphase chromosome alignment"/>
    <property type="evidence" value="ECO:0000315"/>
    <property type="project" value="UniProtKB"/>
</dbReference>
<dbReference type="GO" id="GO:0050804">
    <property type="term" value="P:modulation of chemical synaptic transmission"/>
    <property type="evidence" value="ECO:0007669"/>
    <property type="project" value="Ensembl"/>
</dbReference>
<dbReference type="GO" id="GO:0036258">
    <property type="term" value="P:multivesicular body assembly"/>
    <property type="evidence" value="ECO:0000304"/>
    <property type="project" value="ParkinsonsUK-UCL"/>
</dbReference>
<dbReference type="GO" id="GO:0071985">
    <property type="term" value="P:multivesicular body sorting pathway"/>
    <property type="evidence" value="ECO:0000314"/>
    <property type="project" value="ComplexPortal"/>
</dbReference>
<dbReference type="GO" id="GO:0061763">
    <property type="term" value="P:multivesicular body-lysosome fusion"/>
    <property type="evidence" value="ECO:0000304"/>
    <property type="project" value="ParkinsonsUK-UCL"/>
</dbReference>
<dbReference type="GO" id="GO:0070050">
    <property type="term" value="P:neuron cellular homeostasis"/>
    <property type="evidence" value="ECO:0000315"/>
    <property type="project" value="UniProtKB"/>
</dbReference>
<dbReference type="GO" id="GO:0031468">
    <property type="term" value="P:nuclear membrane reassembly"/>
    <property type="evidence" value="ECO:0000315"/>
    <property type="project" value="ComplexPortal"/>
</dbReference>
<dbReference type="GO" id="GO:0006997">
    <property type="term" value="P:nucleus organization"/>
    <property type="evidence" value="ECO:0000315"/>
    <property type="project" value="UniProtKB"/>
</dbReference>
<dbReference type="GO" id="GO:0001778">
    <property type="term" value="P:plasma membrane repair"/>
    <property type="evidence" value="ECO:0000314"/>
    <property type="project" value="ComplexPortal"/>
</dbReference>
<dbReference type="GO" id="GO:0015031">
    <property type="term" value="P:protein transport"/>
    <property type="evidence" value="ECO:0000318"/>
    <property type="project" value="GO_Central"/>
</dbReference>
<dbReference type="GO" id="GO:0010824">
    <property type="term" value="P:regulation of centrosome duplication"/>
    <property type="evidence" value="ECO:0000315"/>
    <property type="project" value="UniProtKB"/>
</dbReference>
<dbReference type="GO" id="GO:1901673">
    <property type="term" value="P:regulation of mitotic spindle assembly"/>
    <property type="evidence" value="ECO:0000315"/>
    <property type="project" value="UniProtKB"/>
</dbReference>
<dbReference type="GO" id="GO:0099159">
    <property type="term" value="P:regulation of modification of postsynaptic structure"/>
    <property type="evidence" value="ECO:0007669"/>
    <property type="project" value="Ensembl"/>
</dbReference>
<dbReference type="GO" id="GO:0099175">
    <property type="term" value="P:regulation of postsynapse organization"/>
    <property type="evidence" value="ECO:0007669"/>
    <property type="project" value="Ensembl"/>
</dbReference>
<dbReference type="GO" id="GO:0043162">
    <property type="term" value="P:ubiquitin-dependent protein catabolic process via the multivesicular body sorting pathway"/>
    <property type="evidence" value="ECO:0000314"/>
    <property type="project" value="ComplexPortal"/>
</dbReference>
<dbReference type="GO" id="GO:0051469">
    <property type="term" value="P:vesicle fusion with vacuole"/>
    <property type="evidence" value="ECO:0000303"/>
    <property type="project" value="ComplexPortal"/>
</dbReference>
<dbReference type="GO" id="GO:0046761">
    <property type="term" value="P:viral budding from plasma membrane"/>
    <property type="evidence" value="ECO:0000314"/>
    <property type="project" value="ComplexPortal"/>
</dbReference>
<dbReference type="GO" id="GO:0039702">
    <property type="term" value="P:viral budding via host ESCRT complex"/>
    <property type="evidence" value="ECO:0000314"/>
    <property type="project" value="UniProtKB"/>
</dbReference>
<dbReference type="GO" id="GO:0019076">
    <property type="term" value="P:viral release from host cell"/>
    <property type="evidence" value="ECO:0000315"/>
    <property type="project" value="UniProtKB"/>
</dbReference>
<dbReference type="Gene3D" id="6.10.140.1230">
    <property type="match status" value="1"/>
</dbReference>
<dbReference type="InterPro" id="IPR005024">
    <property type="entry name" value="Snf7_fam"/>
</dbReference>
<dbReference type="PANTHER" id="PTHR10476">
    <property type="entry name" value="CHARGED MULTIVESICULAR BODY PROTEIN"/>
    <property type="match status" value="1"/>
</dbReference>
<dbReference type="Pfam" id="PF03357">
    <property type="entry name" value="Snf7"/>
    <property type="match status" value="1"/>
</dbReference>